<protein>
    <recommendedName>
        <fullName>Spore wall protein 1</fullName>
    </recommendedName>
</protein>
<organism>
    <name type="scientific">Encephalitozoon cuniculi (strain GB-M1)</name>
    <name type="common">Microsporidian parasite</name>
    <dbReference type="NCBI Taxonomy" id="284813"/>
    <lineage>
        <taxon>Eukaryota</taxon>
        <taxon>Fungi</taxon>
        <taxon>Fungi incertae sedis</taxon>
        <taxon>Microsporidia</taxon>
        <taxon>Unikaryonidae</taxon>
        <taxon>Encephalitozoon</taxon>
    </lineage>
</organism>
<proteinExistence type="evidence at protein level"/>
<accession>Q9XZV1</accession>
<keyword id="KW-1185">Reference proteome</keyword>
<keyword id="KW-0677">Repeat</keyword>
<keyword id="KW-0732">Signal</keyword>
<keyword id="KW-0749">Sporulation</keyword>
<comment type="function">
    <text>Spore wall component.</text>
</comment>
<comment type="subcellular location">
    <subcellularLocation>
        <location evidence="3 4">Spore</location>
        <location evidence="3 4">Perispore</location>
    </subcellularLocation>
</comment>
<comment type="developmental stage">
    <text evidence="3 4 5">Preferentially synthesized during differentiation from meronts to sporonts in early sporogony.</text>
</comment>
<comment type="miscellaneous">
    <text>SWP1 is a major antigen recognized during host infection and might be a target for microsporidian infection diagnosis in the case of immunocompetent persons.</text>
</comment>
<name>SWP1_ENCCU</name>
<reference key="1">
    <citation type="submission" date="1999-03" db="EMBL/GenBank/DDBJ databases">
        <title>Molecular characterisation of a developmentally expressed spore wall protein from the human microsporidian Encephalitozoon cuniculi.</title>
        <authorList>
            <person name="Bohne W."/>
            <person name="Ferguson D.J.P."/>
            <person name="Kohler K."/>
            <person name="Gross U."/>
        </authorList>
    </citation>
    <scope>NUCLEOTIDE SEQUENCE [MRNA]</scope>
</reference>
<reference key="2">
    <citation type="journal article" date="2001" name="Nature">
        <title>Genome sequence and gene compaction of the eukaryote parasite Encephalitozoon cuniculi.</title>
        <authorList>
            <person name="Katinka M.D."/>
            <person name="Duprat S."/>
            <person name="Cornillot E."/>
            <person name="Metenier G."/>
            <person name="Thomarat F."/>
            <person name="Prensier G."/>
            <person name="Barbe V."/>
            <person name="Peyretaillade E."/>
            <person name="Brottier P."/>
            <person name="Wincker P."/>
            <person name="Delbac F."/>
            <person name="El Alaoui H."/>
            <person name="Peyret P."/>
            <person name="Saurin W."/>
            <person name="Gouy M."/>
            <person name="Weissenbach J."/>
            <person name="Vivares C.P."/>
        </authorList>
    </citation>
    <scope>NUCLEOTIDE SEQUENCE [LARGE SCALE GENOMIC DNA]</scope>
    <source>
        <strain>GB-M1</strain>
    </source>
</reference>
<reference key="3">
    <citation type="journal article" date="2000" name="Infect. Immun.">
        <title>Developmental expression of a tandemly repeated, glycine- and serine-rich spore wall protein in the microsporidian pathogen Encephalitozoon cuniculi.</title>
        <authorList>
            <person name="Bohne W."/>
            <person name="Ferguson D.J.P."/>
            <person name="Kohler K."/>
            <person name="Gross U."/>
        </authorList>
    </citation>
    <scope>IDENTIFICATION AS AN ANTIGEN</scope>
    <scope>SUBCELLULAR LOCATION</scope>
    <scope>DEVELOPMENTAL STAGE</scope>
</reference>
<reference key="4">
    <citation type="journal article" date="2004" name="J. Infect. Dis.">
        <title>Serodiagnostic studies in an immunocompetent individual infected with Encephalitozoon cuniculi.</title>
        <authorList>
            <person name="van Gool T."/>
            <person name="Biderre C."/>
            <person name="Delbac F."/>
            <person name="Wentink-Bonnema E."/>
            <person name="Peek R."/>
            <person name="Vivares C.P."/>
        </authorList>
    </citation>
    <scope>IDENTIFICATION AS A MAJOR ANTIGEN</scope>
</reference>
<reference key="5">
    <citation type="journal article" date="2006" name="Parasitology">
        <title>Expression of two cell wall proteins during the intracellular development of Encephalitozoon cuniculi: an immunocytochemical and in situ hybridization study with ultrathin frozen sections.</title>
        <authorList>
            <person name="Taupin V."/>
            <person name="Metenier G."/>
            <person name="Delbac F."/>
            <person name="Vivares C.P."/>
            <person name="Prensier G."/>
        </authorList>
    </citation>
    <scope>SUBCELLULAR LOCATION</scope>
    <scope>DEVELOPMENTAL STAGE</scope>
</reference>
<reference key="6">
    <citation type="journal article" date="2006" name="Proteomics">
        <title>Proteomic analysis of the eukaryotic parasite Encephalitozoon cuniculi (microsporidia): a reference map for proteins expressed in late sporogonial stages.</title>
        <authorList>
            <person name="Brosson D."/>
            <person name="Kuhn L."/>
            <person name="Delbac F."/>
            <person name="Garin J."/>
            <person name="Vivares C.P."/>
            <person name="Texier C."/>
        </authorList>
    </citation>
    <scope>IDENTIFICATION BY MASS SPECTROMETRY [LARGE SCALE ANALYSIS]</scope>
    <scope>DEVELOPMENTAL STAGE</scope>
</reference>
<feature type="signal peptide" evidence="1">
    <location>
        <begin position="1"/>
        <end position="18"/>
    </location>
</feature>
<feature type="chain" id="PRO_0000022457" description="Spore wall protein 1">
    <location>
        <begin position="19"/>
        <end position="450"/>
    </location>
</feature>
<feature type="repeat" description="1">
    <location>
        <begin position="358"/>
        <end position="374"/>
    </location>
</feature>
<feature type="repeat" description="2">
    <location>
        <begin position="375"/>
        <end position="391"/>
    </location>
</feature>
<feature type="repeat" description="3">
    <location>
        <begin position="392"/>
        <end position="408"/>
    </location>
</feature>
<feature type="repeat" description="4">
    <location>
        <begin position="409"/>
        <end position="425"/>
    </location>
</feature>
<feature type="repeat" description="5">
    <location>
        <begin position="426"/>
        <end position="442"/>
    </location>
</feature>
<feature type="region of interest" description="Disordered" evidence="2">
    <location>
        <begin position="58"/>
        <end position="80"/>
    </location>
</feature>
<feature type="region of interest" description="Disordered" evidence="2">
    <location>
        <begin position="357"/>
        <end position="450"/>
    </location>
</feature>
<feature type="region of interest" description="5 X 17 AA tandem repeats of G-S-G-S-G-G-S-S-G-G-S-S-G-S-G-S-D">
    <location>
        <begin position="358"/>
        <end position="442"/>
    </location>
</feature>
<dbReference type="EMBL" id="AJ133745">
    <property type="protein sequence ID" value="CAB39735.1"/>
    <property type="molecule type" value="mRNA"/>
</dbReference>
<dbReference type="EMBL" id="AL590449">
    <property type="protein sequence ID" value="CAD25887.1"/>
    <property type="molecule type" value="Genomic_DNA"/>
</dbReference>
<dbReference type="RefSeq" id="NP_586283.1">
    <property type="nucleotide sequence ID" value="NM_001042116.1"/>
</dbReference>
<dbReference type="STRING" id="284813.Q9XZV1"/>
<dbReference type="GeneID" id="859934"/>
<dbReference type="KEGG" id="ecu:ECU10_1660"/>
<dbReference type="VEuPathDB" id="MicrosporidiaDB:ECU10_1660"/>
<dbReference type="HOGENOM" id="CLU_036413_0_0_1"/>
<dbReference type="InParanoid" id="Q9XZV1"/>
<dbReference type="OrthoDB" id="2195471at2759"/>
<dbReference type="Proteomes" id="UP000000819">
    <property type="component" value="Chromosome X"/>
</dbReference>
<dbReference type="GO" id="GO:0030435">
    <property type="term" value="P:sporulation resulting in formation of a cellular spore"/>
    <property type="evidence" value="ECO:0007669"/>
    <property type="project" value="UniProtKB-KW"/>
</dbReference>
<dbReference type="InterPro" id="IPR052258">
    <property type="entry name" value="Diverse_Func_Domain-Protein"/>
</dbReference>
<dbReference type="PANTHER" id="PTHR37612">
    <property type="entry name" value="FIBROIN HEAVY CHAIN FIB-H LIKE PROTEIN"/>
    <property type="match status" value="1"/>
</dbReference>
<dbReference type="PANTHER" id="PTHR37612:SF20">
    <property type="entry name" value="PER-HEXAMER REPEAT PROTEIN 5-RELATED"/>
    <property type="match status" value="1"/>
</dbReference>
<evidence type="ECO:0000255" key="1"/>
<evidence type="ECO:0000256" key="2">
    <source>
        <dbReference type="SAM" id="MobiDB-lite"/>
    </source>
</evidence>
<evidence type="ECO:0000269" key="3">
    <source>
    </source>
</evidence>
<evidence type="ECO:0000269" key="4">
    <source>
    </source>
</evidence>
<evidence type="ECO:0000269" key="5">
    <source>
    </source>
</evidence>
<gene>
    <name type="primary">SWP1</name>
    <name type="ordered locus">ECU10_1660</name>
</gene>
<sequence>MMKLSLLLGLVSFSAVLASENRRGNCQMCPEGTRYFEKNNLLGRRFKNDVRKLCGDGMSSDVHDESSSHSSSSSDCKPRRRRHHRRYEDSCSFGSSDCDDSSTYSSCVSSECSPPCRPVPLNCDYELKTPIINMGERIFEFLKNYEDQYKKAVVLFLTRILSQIDGFAPSYPSADYEPLIEQLETLGVTVPSNMAADLAALDAAEATSLAGTIRANAQKVIGDLLARVNTMCYLDLMSLVTSGLFASQVTSAFSNTQPIITIAGNDLFTKQMAVFQRLPGTLPSAAITAITNALQANKNNFVTFFTTQTTNLQTDVQNALTALITALTTLTSTTSTEFTQFANSEIGALTGRIFGSSGSGSGGSSGGSSGSGSDGSGSGGSSGGSSGSGSDGSGSGGSSGGSSGSGSDGSGSGGSSGGSSGSGSDGSGSGGSSGGSSGSGSGGESGGSSS</sequence>